<keyword id="KW-0067">ATP-binding</keyword>
<keyword id="KW-0418">Kinase</keyword>
<keyword id="KW-0547">Nucleotide-binding</keyword>
<keyword id="KW-1185">Reference proteome</keyword>
<keyword id="KW-0808">Transferase</keyword>
<keyword id="KW-0829">Tyrosine-protein kinase</keyword>
<protein>
    <recommendedName>
        <fullName>Putative tyrosine-protein kinase C03B1.5</fullName>
        <ecNumber>2.7.10.2</ecNumber>
    </recommendedName>
</protein>
<evidence type="ECO:0000255" key="1">
    <source>
        <dbReference type="PROSITE-ProRule" id="PRU00159"/>
    </source>
</evidence>
<evidence type="ECO:0000255" key="2">
    <source>
        <dbReference type="PROSITE-ProRule" id="PRU10028"/>
    </source>
</evidence>
<gene>
    <name type="ORF">C03B1.5</name>
</gene>
<name>YX05_CAEEL</name>
<comment type="catalytic activity">
    <reaction evidence="2">
        <text>L-tyrosyl-[protein] + ATP = O-phospho-L-tyrosyl-[protein] + ADP + H(+)</text>
        <dbReference type="Rhea" id="RHEA:10596"/>
        <dbReference type="Rhea" id="RHEA-COMP:10136"/>
        <dbReference type="Rhea" id="RHEA-COMP:20101"/>
        <dbReference type="ChEBI" id="CHEBI:15378"/>
        <dbReference type="ChEBI" id="CHEBI:30616"/>
        <dbReference type="ChEBI" id="CHEBI:46858"/>
        <dbReference type="ChEBI" id="CHEBI:61978"/>
        <dbReference type="ChEBI" id="CHEBI:456216"/>
        <dbReference type="EC" id="2.7.10.2"/>
    </reaction>
</comment>
<comment type="similarity">
    <text evidence="1">Belongs to the protein kinase superfamily. Tyr protein kinase family.</text>
</comment>
<organism>
    <name type="scientific">Caenorhabditis elegans</name>
    <dbReference type="NCBI Taxonomy" id="6239"/>
    <lineage>
        <taxon>Eukaryota</taxon>
        <taxon>Metazoa</taxon>
        <taxon>Ecdysozoa</taxon>
        <taxon>Nematoda</taxon>
        <taxon>Chromadorea</taxon>
        <taxon>Rhabditida</taxon>
        <taxon>Rhabditina</taxon>
        <taxon>Rhabditomorpha</taxon>
        <taxon>Rhabditoidea</taxon>
        <taxon>Rhabditidae</taxon>
        <taxon>Peloderinae</taxon>
        <taxon>Caenorhabditis</taxon>
    </lineage>
</organism>
<feature type="chain" id="PRO_0000088187" description="Putative tyrosine-protein kinase C03B1.5">
    <location>
        <begin position="1"/>
        <end position="328"/>
    </location>
</feature>
<feature type="domain" description="Protein kinase" evidence="1">
    <location>
        <begin position="25"/>
        <end position="288"/>
    </location>
</feature>
<feature type="active site" description="Proton acceptor" evidence="1 2">
    <location>
        <position position="155"/>
    </location>
</feature>
<feature type="binding site" evidence="1">
    <location>
        <begin position="31"/>
        <end position="39"/>
    </location>
    <ligand>
        <name>ATP</name>
        <dbReference type="ChEBI" id="CHEBI:30616"/>
    </ligand>
</feature>
<feature type="binding site" evidence="1">
    <location>
        <position position="62"/>
    </location>
    <ligand>
        <name>ATP</name>
        <dbReference type="ChEBI" id="CHEBI:30616"/>
    </ligand>
</feature>
<accession>Q11112</accession>
<sequence>MQSAQKSKTNGDTSLFLMKDIPQYWSPALKIGSGAFGEVMLVHSDRLDARGEQILHNEFALKVIRFPECDYHKIIREVNTHTLCRHHDNVLFIGSIYCQTFQQGLRVQMCLEYAALSDLSLLASSETFESHVAYICKNLISALIHIHNLGIVHGDLSVKNILMTHEGVVKLSDFGMANTFEQTRKSKNQSILGTPGFIAPEIINLQGYDGKADLWGLGILSLFLLKGENPFKKCTQFDLESYKVSISESFYPDYSNYSTPLQEFMSSLKDYNPEFRSSALHASSQTYLKTSCSQSEILNYYKRLRRTRGMDLPWPEEIHTFSVPVSLE</sequence>
<reference key="1">
    <citation type="journal article" date="1998" name="Science">
        <title>Genome sequence of the nematode C. elegans: a platform for investigating biology.</title>
        <authorList>
            <consortium name="The C. elegans sequencing consortium"/>
        </authorList>
    </citation>
    <scope>NUCLEOTIDE SEQUENCE [LARGE SCALE GENOMIC DNA]</scope>
    <source>
        <strain>Bristol N2</strain>
    </source>
</reference>
<proteinExistence type="inferred from homology"/>
<dbReference type="EC" id="2.7.10.2"/>
<dbReference type="EMBL" id="FO080304">
    <property type="protein sequence ID" value="CCD62741.1"/>
    <property type="molecule type" value="Genomic_DNA"/>
</dbReference>
<dbReference type="PIR" id="T15383">
    <property type="entry name" value="T15383"/>
</dbReference>
<dbReference type="RefSeq" id="NP_509065.2">
    <property type="nucleotide sequence ID" value="NM_076664.8"/>
</dbReference>
<dbReference type="SMR" id="Q11112"/>
<dbReference type="STRING" id="6239.C03B1.5.1"/>
<dbReference type="PaxDb" id="6239-C03B1.5"/>
<dbReference type="EnsemblMetazoa" id="C03B1.5.1">
    <property type="protein sequence ID" value="C03B1.5.1"/>
    <property type="gene ID" value="WBGene00015376"/>
</dbReference>
<dbReference type="GeneID" id="182148"/>
<dbReference type="KEGG" id="cel:CELE_C03B1.5"/>
<dbReference type="UCSC" id="C03B1.5">
    <property type="organism name" value="c. elegans"/>
</dbReference>
<dbReference type="AGR" id="WB:WBGene00015376"/>
<dbReference type="CTD" id="182148"/>
<dbReference type="WormBase" id="C03B1.5">
    <property type="protein sequence ID" value="CE37605"/>
    <property type="gene ID" value="WBGene00015376"/>
</dbReference>
<dbReference type="eggNOG" id="KOG0201">
    <property type="taxonomic scope" value="Eukaryota"/>
</dbReference>
<dbReference type="GeneTree" id="ENSGT00980000202013"/>
<dbReference type="HOGENOM" id="CLU_897814_0_0_1"/>
<dbReference type="InParanoid" id="Q11112"/>
<dbReference type="OMA" id="RVQMCLE"/>
<dbReference type="OrthoDB" id="4062651at2759"/>
<dbReference type="PhylomeDB" id="Q11112"/>
<dbReference type="PRO" id="PR:Q11112"/>
<dbReference type="Proteomes" id="UP000001940">
    <property type="component" value="Chromosome X"/>
</dbReference>
<dbReference type="Bgee" id="WBGene00015376">
    <property type="expression patterns" value="Expressed in embryo and 2 other cell types or tissues"/>
</dbReference>
<dbReference type="GO" id="GO:0005524">
    <property type="term" value="F:ATP binding"/>
    <property type="evidence" value="ECO:0007669"/>
    <property type="project" value="UniProtKB-KW"/>
</dbReference>
<dbReference type="GO" id="GO:0004715">
    <property type="term" value="F:non-membrane spanning protein tyrosine kinase activity"/>
    <property type="evidence" value="ECO:0007669"/>
    <property type="project" value="UniProtKB-EC"/>
</dbReference>
<dbReference type="Gene3D" id="1.10.510.10">
    <property type="entry name" value="Transferase(Phosphotransferase) domain 1"/>
    <property type="match status" value="1"/>
</dbReference>
<dbReference type="InterPro" id="IPR011009">
    <property type="entry name" value="Kinase-like_dom_sf"/>
</dbReference>
<dbReference type="InterPro" id="IPR000719">
    <property type="entry name" value="Prot_kinase_dom"/>
</dbReference>
<dbReference type="InterPro" id="IPR017441">
    <property type="entry name" value="Protein_kinase_ATP_BS"/>
</dbReference>
<dbReference type="InterPro" id="IPR050285">
    <property type="entry name" value="STE20_Ser/Thr_kinase"/>
</dbReference>
<dbReference type="InterPro" id="IPR008266">
    <property type="entry name" value="Tyr_kinase_AS"/>
</dbReference>
<dbReference type="PANTHER" id="PTHR48015">
    <property type="entry name" value="SERINE/THREONINE-PROTEIN KINASE TAO"/>
    <property type="match status" value="1"/>
</dbReference>
<dbReference type="PANTHER" id="PTHR48015:SF16">
    <property type="entry name" value="SERINE_THREONINE-PROTEIN KINASE SULU"/>
    <property type="match status" value="1"/>
</dbReference>
<dbReference type="Pfam" id="PF00069">
    <property type="entry name" value="Pkinase"/>
    <property type="match status" value="1"/>
</dbReference>
<dbReference type="SUPFAM" id="SSF56112">
    <property type="entry name" value="Protein kinase-like (PK-like)"/>
    <property type="match status" value="1"/>
</dbReference>
<dbReference type="PROSITE" id="PS00107">
    <property type="entry name" value="PROTEIN_KINASE_ATP"/>
    <property type="match status" value="1"/>
</dbReference>
<dbReference type="PROSITE" id="PS50011">
    <property type="entry name" value="PROTEIN_KINASE_DOM"/>
    <property type="match status" value="1"/>
</dbReference>
<dbReference type="PROSITE" id="PS00109">
    <property type="entry name" value="PROTEIN_KINASE_TYR"/>
    <property type="match status" value="1"/>
</dbReference>